<accession>P25381</accession>
<accession>D6VR54</accession>
<proteinExistence type="evidence at protein level"/>
<gene>
    <name type="primary">RRT12</name>
    <name type="synonym">OSW3</name>
    <name type="ordered locus">YCR045C</name>
    <name type="ORF">YCR45C</name>
</gene>
<organism>
    <name type="scientific">Saccharomyces cerevisiae (strain ATCC 204508 / S288c)</name>
    <name type="common">Baker's yeast</name>
    <dbReference type="NCBI Taxonomy" id="559292"/>
    <lineage>
        <taxon>Eukaryota</taxon>
        <taxon>Fungi</taxon>
        <taxon>Dikarya</taxon>
        <taxon>Ascomycota</taxon>
        <taxon>Saccharomycotina</taxon>
        <taxon>Saccharomycetes</taxon>
        <taxon>Saccharomycetales</taxon>
        <taxon>Saccharomycetaceae</taxon>
        <taxon>Saccharomyces</taxon>
    </lineage>
</organism>
<keyword id="KW-0325">Glycoprotein</keyword>
<keyword id="KW-0378">Hydrolase</keyword>
<keyword id="KW-0645">Protease</keyword>
<keyword id="KW-1185">Reference proteome</keyword>
<keyword id="KW-0720">Serine protease</keyword>
<keyword id="KW-0732">Signal</keyword>
<keyword id="KW-0749">Sporulation</keyword>
<feature type="signal peptide" evidence="1">
    <location>
        <begin position="1"/>
        <end position="17"/>
    </location>
</feature>
<feature type="chain" id="PRO_0000027205" description="Subtilase-type proteinase RRT12">
    <location>
        <begin position="18"/>
        <end position="491"/>
    </location>
</feature>
<feature type="domain" description="Peptidase S8" evidence="2">
    <location>
        <begin position="142"/>
        <end position="442"/>
    </location>
</feature>
<feature type="active site" description="Charge relay system" evidence="2">
    <location>
        <position position="174"/>
    </location>
</feature>
<feature type="active site" description="Charge relay system" evidence="2">
    <location>
        <position position="205"/>
    </location>
</feature>
<feature type="active site" description="Charge relay system" evidence="2">
    <location>
        <position position="365"/>
    </location>
</feature>
<feature type="glycosylation site" description="N-linked (GlcNAc...) asparagine" evidence="1">
    <location>
        <position position="38"/>
    </location>
</feature>
<feature type="glycosylation site" description="N-linked (GlcNAc...) asparagine" evidence="1">
    <location>
        <position position="64"/>
    </location>
</feature>
<feature type="glycosylation site" description="N-linked (GlcNAc...) asparagine" evidence="1">
    <location>
        <position position="106"/>
    </location>
</feature>
<feature type="glycosylation site" description="N-linked (GlcNAc...) asparagine" evidence="1">
    <location>
        <position position="121"/>
    </location>
</feature>
<feature type="glycosylation site" description="N-linked (GlcNAc...) asparagine" evidence="1">
    <location>
        <position position="268"/>
    </location>
</feature>
<feature type="glycosylation site" description="N-linked (GlcNAc...) asparagine" evidence="1">
    <location>
        <position position="356"/>
    </location>
</feature>
<feature type="glycosylation site" description="N-linked (GlcNAc...) asparagine" evidence="1">
    <location>
        <position position="449"/>
    </location>
</feature>
<feature type="mutagenesis site" description="Abolishes protease activity." evidence="5">
    <original>S</original>
    <variation>A</variation>
    <location>
        <position position="365"/>
    </location>
</feature>
<reference key="1">
    <citation type="journal article" date="1992" name="Nature">
        <title>The complete DNA sequence of yeast chromosome III.</title>
        <authorList>
            <person name="Oliver S.G."/>
            <person name="van der Aart Q.J.M."/>
            <person name="Agostoni-Carbone M.L."/>
            <person name="Aigle M."/>
            <person name="Alberghina L."/>
            <person name="Alexandraki D."/>
            <person name="Antoine G."/>
            <person name="Anwar R."/>
            <person name="Ballesta J.P.G."/>
            <person name="Benit P."/>
            <person name="Berben G."/>
            <person name="Bergantino E."/>
            <person name="Biteau N."/>
            <person name="Bolle P.-A."/>
            <person name="Bolotin-Fukuhara M."/>
            <person name="Brown A."/>
            <person name="Brown A.J.P."/>
            <person name="Buhler J.-M."/>
            <person name="Carcano C."/>
            <person name="Carignani G."/>
            <person name="Cederberg H."/>
            <person name="Chanet R."/>
            <person name="Contreras R."/>
            <person name="Crouzet M."/>
            <person name="Daignan-Fornier B."/>
            <person name="Defoor E."/>
            <person name="Delgado M.D."/>
            <person name="Demolder J."/>
            <person name="Doira C."/>
            <person name="Dubois E."/>
            <person name="Dujon B."/>
            <person name="Duesterhoeft A."/>
            <person name="Erdmann D."/>
            <person name="Esteban M."/>
            <person name="Fabre F."/>
            <person name="Fairhead C."/>
            <person name="Faye G."/>
            <person name="Feldmann H."/>
            <person name="Fiers W."/>
            <person name="Francingues-Gaillard M.-C."/>
            <person name="Franco L."/>
            <person name="Frontali L."/>
            <person name="Fukuhara H."/>
            <person name="Fuller L.J."/>
            <person name="Galland P."/>
            <person name="Gent M.E."/>
            <person name="Gigot D."/>
            <person name="Gilliquet V."/>
            <person name="Glansdorff N."/>
            <person name="Goffeau A."/>
            <person name="Grenson M."/>
            <person name="Grisanti P."/>
            <person name="Grivell L.A."/>
            <person name="de Haan M."/>
            <person name="Haasemann M."/>
            <person name="Hatat D."/>
            <person name="Hoenicka J."/>
            <person name="Hegemann J.H."/>
            <person name="Herbert C.J."/>
            <person name="Hilger F."/>
            <person name="Hohmann S."/>
            <person name="Hollenberg C.P."/>
            <person name="Huse K."/>
            <person name="Iborra F."/>
            <person name="Indge K.J."/>
            <person name="Isono K."/>
            <person name="Jacq C."/>
            <person name="Jacquet M."/>
            <person name="James C.M."/>
            <person name="Jauniaux J.-C."/>
            <person name="Jia Y."/>
            <person name="Jimenez A."/>
            <person name="Kelly A."/>
            <person name="Kleinhans U."/>
            <person name="Kreisl P."/>
            <person name="Lanfranchi G."/>
            <person name="Lewis C."/>
            <person name="van der Linden C.G."/>
            <person name="Lucchini G."/>
            <person name="Lutzenkirchen K."/>
            <person name="Maat M.J."/>
            <person name="Mallet L."/>
            <person name="Mannhaupt G."/>
            <person name="Martegani E."/>
            <person name="Mathieu A."/>
            <person name="Maurer C.T.C."/>
            <person name="McConnell D."/>
            <person name="McKee R.A."/>
            <person name="Messenguy F."/>
            <person name="Mewes H.-W."/>
            <person name="Molemans F."/>
            <person name="Montague M.A."/>
            <person name="Muzi Falconi M."/>
            <person name="Navas L."/>
            <person name="Newlon C.S."/>
            <person name="Noone D."/>
            <person name="Pallier C."/>
            <person name="Panzeri L."/>
            <person name="Pearson B.M."/>
            <person name="Perea J."/>
            <person name="Philippsen P."/>
            <person name="Pierard A."/>
            <person name="Planta R.J."/>
            <person name="Plevani P."/>
            <person name="Poetsch B."/>
            <person name="Pohl F.M."/>
            <person name="Purnelle B."/>
            <person name="Ramezani Rad M."/>
            <person name="Rasmussen S.W."/>
            <person name="Raynal A."/>
            <person name="Remacha M.A."/>
            <person name="Richterich P."/>
            <person name="Roberts A.B."/>
            <person name="Rodriguez F."/>
            <person name="Sanz E."/>
            <person name="Schaaff-Gerstenschlaeger I."/>
            <person name="Scherens B."/>
            <person name="Schweitzer B."/>
            <person name="Shu Y."/>
            <person name="Skala J."/>
            <person name="Slonimski P.P."/>
            <person name="Sor F."/>
            <person name="Soustelle C."/>
            <person name="Spiegelberg R."/>
            <person name="Stateva L.I."/>
            <person name="Steensma H.Y."/>
            <person name="Steiner S."/>
            <person name="Thierry A."/>
            <person name="Thireos G."/>
            <person name="Tzermia M."/>
            <person name="Urrestarazu L.A."/>
            <person name="Valle G."/>
            <person name="Vetter I."/>
            <person name="van Vliet-Reedijk J.C."/>
            <person name="Voet M."/>
            <person name="Volckaert G."/>
            <person name="Vreken P."/>
            <person name="Wang H."/>
            <person name="Warmington J.R."/>
            <person name="von Wettstein D."/>
            <person name="Wicksteed B.L."/>
            <person name="Wilson C."/>
            <person name="Wurst H."/>
            <person name="Xu G."/>
            <person name="Yoshikawa A."/>
            <person name="Zimmermann F.K."/>
            <person name="Sgouros J.G."/>
        </authorList>
    </citation>
    <scope>NUCLEOTIDE SEQUENCE [LARGE SCALE GENOMIC DNA]</scope>
    <source>
        <strain>ATCC 204508 / S288c</strain>
    </source>
</reference>
<reference key="2">
    <citation type="journal article" date="2014" name="G3 (Bethesda)">
        <title>The reference genome sequence of Saccharomyces cerevisiae: Then and now.</title>
        <authorList>
            <person name="Engel S.R."/>
            <person name="Dietrich F.S."/>
            <person name="Fisk D.G."/>
            <person name="Binkley G."/>
            <person name="Balakrishnan R."/>
            <person name="Costanzo M.C."/>
            <person name="Dwight S.S."/>
            <person name="Hitz B.C."/>
            <person name="Karra K."/>
            <person name="Nash R.S."/>
            <person name="Weng S."/>
            <person name="Wong E.D."/>
            <person name="Lloyd P."/>
            <person name="Skrzypek M.S."/>
            <person name="Miyasato S.R."/>
            <person name="Simison M."/>
            <person name="Cherry J.M."/>
        </authorList>
    </citation>
    <scope>GENOME REANNOTATION</scope>
    <source>
        <strain>ATCC 204508 / S288c</strain>
    </source>
</reference>
<reference key="3">
    <citation type="journal article" date="2009" name="Genetics">
        <title>Genetic identification of factors that modulate ribosomal DNA transcription in Saccharomyces cerevisiae.</title>
        <authorList>
            <person name="Hontz R.D."/>
            <person name="Niederer R.O."/>
            <person name="Johnson J.M."/>
            <person name="Smith J.S."/>
        </authorList>
    </citation>
    <scope>GENE NAME</scope>
    <scope>FUNCTION</scope>
</reference>
<reference key="4">
    <citation type="journal article" date="2009" name="Mol. Syst. Biol.">
        <title>Global analysis of the glycoproteome in Saccharomyces cerevisiae reveals new roles for protein glycosylation in eukaryotes.</title>
        <authorList>
            <person name="Kung L.A."/>
            <person name="Tao S.-C."/>
            <person name="Qian J."/>
            <person name="Smith M.G."/>
            <person name="Snyder M."/>
            <person name="Zhu H."/>
        </authorList>
    </citation>
    <scope>GLYCOSYLATION [LARGE SCALE ANALYSIS]</scope>
</reference>
<reference key="5">
    <citation type="journal article" date="2009" name="PLoS ONE">
        <title>A screen for spore wall permeability mutants identifies a secreted protease required for proper spore wall assembly.</title>
        <authorList>
            <person name="Suda Y."/>
            <person name="Rodriguez R.K."/>
            <person name="Coluccio A.E."/>
            <person name="Neiman A.M."/>
        </authorList>
    </citation>
    <scope>FUNCTION</scope>
    <scope>SUBCELLULAR LOCATION</scope>
    <scope>MUTAGENESIS OF SER-365</scope>
</reference>
<dbReference type="EC" id="3.4.21.-"/>
<dbReference type="EMBL" id="X59720">
    <property type="protein sequence ID" value="CAA42293.1"/>
    <property type="molecule type" value="Genomic_DNA"/>
</dbReference>
<dbReference type="EMBL" id="BK006937">
    <property type="protein sequence ID" value="DAA07523.1"/>
    <property type="molecule type" value="Genomic_DNA"/>
</dbReference>
<dbReference type="PIR" id="S19458">
    <property type="entry name" value="S19458"/>
</dbReference>
<dbReference type="RefSeq" id="NP_009974.1">
    <property type="nucleotide sequence ID" value="NM_001178759.1"/>
</dbReference>
<dbReference type="SMR" id="P25381"/>
<dbReference type="BioGRID" id="31027">
    <property type="interactions" value="53"/>
</dbReference>
<dbReference type="DIP" id="DIP-1543N"/>
<dbReference type="FunCoup" id="P25381">
    <property type="interactions" value="40"/>
</dbReference>
<dbReference type="IntAct" id="P25381">
    <property type="interactions" value="1"/>
</dbReference>
<dbReference type="MINT" id="P25381"/>
<dbReference type="STRING" id="4932.YCR045C"/>
<dbReference type="MEROPS" id="S08.A50"/>
<dbReference type="GlyCosmos" id="P25381">
    <property type="glycosylation" value="7 sites, No reported glycans"/>
</dbReference>
<dbReference type="GlyGen" id="P25381">
    <property type="glycosylation" value="7 sites"/>
</dbReference>
<dbReference type="PaxDb" id="4932-YCR045C"/>
<dbReference type="PeptideAtlas" id="P25381"/>
<dbReference type="EnsemblFungi" id="YCR045C_mRNA">
    <property type="protein sequence ID" value="YCR045C"/>
    <property type="gene ID" value="YCR045C"/>
</dbReference>
<dbReference type="GeneID" id="850412"/>
<dbReference type="KEGG" id="sce:YCR045C"/>
<dbReference type="AGR" id="SGD:S000000641"/>
<dbReference type="SGD" id="S000000641">
    <property type="gene designation" value="RRT12"/>
</dbReference>
<dbReference type="VEuPathDB" id="FungiDB:YCR045C"/>
<dbReference type="eggNOG" id="KOG1153">
    <property type="taxonomic scope" value="Eukaryota"/>
</dbReference>
<dbReference type="HOGENOM" id="CLU_011263_1_0_1"/>
<dbReference type="InParanoid" id="P25381"/>
<dbReference type="OMA" id="YWASPAS"/>
<dbReference type="OrthoDB" id="206201at2759"/>
<dbReference type="BioCyc" id="YEAST:G3O-29356-MONOMER"/>
<dbReference type="Reactome" id="R-SCE-8866427">
    <property type="pathway name" value="VLDLR internalisation and degradation"/>
</dbReference>
<dbReference type="Reactome" id="R-SCE-8964038">
    <property type="pathway name" value="LDL clearance"/>
</dbReference>
<dbReference type="BioGRID-ORCS" id="850412">
    <property type="hits" value="4 hits in 10 CRISPR screens"/>
</dbReference>
<dbReference type="PRO" id="PR:P25381"/>
<dbReference type="Proteomes" id="UP000002311">
    <property type="component" value="Chromosome III"/>
</dbReference>
<dbReference type="RNAct" id="P25381">
    <property type="molecule type" value="protein"/>
</dbReference>
<dbReference type="GO" id="GO:0005619">
    <property type="term" value="C:ascospore wall"/>
    <property type="evidence" value="ECO:0000314"/>
    <property type="project" value="SGD"/>
</dbReference>
<dbReference type="GO" id="GO:0005615">
    <property type="term" value="C:extracellular space"/>
    <property type="evidence" value="ECO:0000318"/>
    <property type="project" value="GO_Central"/>
</dbReference>
<dbReference type="GO" id="GO:0005635">
    <property type="term" value="C:nuclear envelope"/>
    <property type="evidence" value="ECO:0000314"/>
    <property type="project" value="SGD"/>
</dbReference>
<dbReference type="GO" id="GO:0004252">
    <property type="term" value="F:serine-type endopeptidase activity"/>
    <property type="evidence" value="ECO:0000318"/>
    <property type="project" value="GO_Central"/>
</dbReference>
<dbReference type="GO" id="GO:0030476">
    <property type="term" value="P:ascospore wall assembly"/>
    <property type="evidence" value="ECO:0000315"/>
    <property type="project" value="SGD"/>
</dbReference>
<dbReference type="GO" id="GO:0006508">
    <property type="term" value="P:proteolysis"/>
    <property type="evidence" value="ECO:0007669"/>
    <property type="project" value="UniProtKB-KW"/>
</dbReference>
<dbReference type="CDD" id="cd04077">
    <property type="entry name" value="Peptidases_S8_PCSK9_ProteinaseK_like"/>
    <property type="match status" value="1"/>
</dbReference>
<dbReference type="FunFam" id="3.40.50.200:FF:000007">
    <property type="entry name" value="Subtilisin-like serine protease"/>
    <property type="match status" value="1"/>
</dbReference>
<dbReference type="Gene3D" id="3.40.50.200">
    <property type="entry name" value="Peptidase S8/S53 domain"/>
    <property type="match status" value="1"/>
</dbReference>
<dbReference type="InterPro" id="IPR034193">
    <property type="entry name" value="PCSK9_ProteinaseK-like"/>
</dbReference>
<dbReference type="InterPro" id="IPR000209">
    <property type="entry name" value="Peptidase_S8/S53_dom"/>
</dbReference>
<dbReference type="InterPro" id="IPR036852">
    <property type="entry name" value="Peptidase_S8/S53_dom_sf"/>
</dbReference>
<dbReference type="InterPro" id="IPR023827">
    <property type="entry name" value="Peptidase_S8_Asp-AS"/>
</dbReference>
<dbReference type="InterPro" id="IPR022398">
    <property type="entry name" value="Peptidase_S8_His-AS"/>
</dbReference>
<dbReference type="InterPro" id="IPR023828">
    <property type="entry name" value="Peptidase_S8_Ser-AS"/>
</dbReference>
<dbReference type="InterPro" id="IPR050131">
    <property type="entry name" value="Peptidase_S8_subtilisin-like"/>
</dbReference>
<dbReference type="InterPro" id="IPR015500">
    <property type="entry name" value="Peptidase_S8_subtilisin-rel"/>
</dbReference>
<dbReference type="PANTHER" id="PTHR43806">
    <property type="entry name" value="PEPTIDASE S8"/>
    <property type="match status" value="1"/>
</dbReference>
<dbReference type="PANTHER" id="PTHR43806:SF13">
    <property type="entry name" value="SUBTILASE-TYPE PROTEINASE RRT12"/>
    <property type="match status" value="1"/>
</dbReference>
<dbReference type="Pfam" id="PF00082">
    <property type="entry name" value="Peptidase_S8"/>
    <property type="match status" value="1"/>
</dbReference>
<dbReference type="PRINTS" id="PR00723">
    <property type="entry name" value="SUBTILISIN"/>
</dbReference>
<dbReference type="SUPFAM" id="SSF54897">
    <property type="entry name" value="Protease propeptides/inhibitors"/>
    <property type="match status" value="1"/>
</dbReference>
<dbReference type="SUPFAM" id="SSF52743">
    <property type="entry name" value="Subtilisin-like"/>
    <property type="match status" value="1"/>
</dbReference>
<dbReference type="PROSITE" id="PS51892">
    <property type="entry name" value="SUBTILASE"/>
    <property type="match status" value="1"/>
</dbReference>
<dbReference type="PROSITE" id="PS00136">
    <property type="entry name" value="SUBTILASE_ASP"/>
    <property type="match status" value="1"/>
</dbReference>
<dbReference type="PROSITE" id="PS00137">
    <property type="entry name" value="SUBTILASE_HIS"/>
    <property type="match status" value="1"/>
</dbReference>
<dbReference type="PROSITE" id="PS00138">
    <property type="entry name" value="SUBTILASE_SER"/>
    <property type="match status" value="1"/>
</dbReference>
<evidence type="ECO:0000255" key="1"/>
<evidence type="ECO:0000255" key="2">
    <source>
        <dbReference type="PROSITE-ProRule" id="PRU01240"/>
    </source>
</evidence>
<evidence type="ECO:0000269" key="3">
    <source>
    </source>
</evidence>
<evidence type="ECO:0000269" key="4">
    <source>
    </source>
</evidence>
<evidence type="ECO:0000269" key="5">
    <source>
    </source>
</evidence>
<evidence type="ECO:0000305" key="6"/>
<protein>
    <recommendedName>
        <fullName>Subtilase-type proteinase RRT12</fullName>
        <ecNumber>3.4.21.-</ecNumber>
    </recommendedName>
    <alternativeName>
        <fullName>Outer spore wall protein 3</fullName>
    </alternativeName>
    <alternativeName>
        <fullName>Regulator of rDNA transcription protein 12</fullName>
    </alternativeName>
</protein>
<name>RRT12_YEAST</name>
<sequence length="491" mass="55068">MKPQCILISLLVNLAYAEEYLVRFKNPTAFQQFTSNSNRSWRQFIDNKIEKKFSIGSFRGVTMNLSKNLVNKLKKSPLVADIVPNFRFEAFEGDSVNSAESSYTFNATAKYSYEDVEEEQNITYQPDAPRHLARISRHYQLPFDVGDKDRYKSWFNYYYEHDYQGQDVNAYIMDTGIFADHPEFEDRVIQGIDLTKEGFGDQNGHGTHVAGLVGSKTYGAAKRVNLVEVKVLGKDGSGEASNVLSGLEFIVEHCTKVSRPQGKKCVANLSLGSFRSPIINMAVEGAIEEGIVFVAAAGNFNLDAYWASPASAENVITVGAFDDHIDTIAKFSNWGPCVNIFAPGVEIESLSHLNYNDTLILSGTSMSTPIVTGVAAILLSKGIEPEMIAQEIEYLSTRNVFHRRTLFFKPSTPNQILYNGVDKLDDPYDDETFPRLNIEAIAKELEEYNATLQTPMSENLQSGSKLWGWNNDVTLPLGEIRLKRRDFMKNL</sequence>
<comment type="function">
    <text evidence="3 5">Subtilisin-related protease involved in the formation of a protective dityrosine layer required for spore wall assembly. Identified in a screen for mutants with increased levels of rDNA transcription.</text>
</comment>
<comment type="subcellular location">
    <subcellularLocation>
        <location evidence="5">Spore wall</location>
    </subcellularLocation>
</comment>
<comment type="PTM">
    <text evidence="4">N-glycosylated.</text>
</comment>
<comment type="similarity">
    <text evidence="6">Belongs to the peptidase S8 family.</text>
</comment>